<protein>
    <recommendedName>
        <fullName evidence="1">Pyrophosphate--fructose 6-phosphate 1-phosphotransferase</fullName>
        <ecNumber evidence="1">2.7.1.90</ecNumber>
    </recommendedName>
    <alternativeName>
        <fullName evidence="1">6-phosphofructokinase, pyrophosphate dependent</fullName>
    </alternativeName>
    <alternativeName>
        <fullName evidence="1">PPi-dependent phosphofructokinase</fullName>
        <shortName evidence="1">PPi-PFK</shortName>
    </alternativeName>
    <alternativeName>
        <fullName evidence="1">Pyrophosphate-dependent 6-phosphofructose-1-kinase</fullName>
    </alternativeName>
</protein>
<organism>
    <name type="scientific">Porphyromonas gingivalis</name>
    <name type="common">Bacteroides gingivalis</name>
    <dbReference type="NCBI Taxonomy" id="837"/>
    <lineage>
        <taxon>Bacteria</taxon>
        <taxon>Pseudomonadati</taxon>
        <taxon>Bacteroidota</taxon>
        <taxon>Bacteroidia</taxon>
        <taxon>Bacteroidales</taxon>
        <taxon>Porphyromonadaceae</taxon>
        <taxon>Porphyromonas</taxon>
    </lineage>
</organism>
<reference key="1">
    <citation type="journal article" date="2001" name="J. Dent. Health">
        <title>Cloning, expression, and characterization of pyrophosphate-dependent phosphofructokinase gene from Porphyromonas gingivalis.</title>
        <authorList>
            <person name="Arimoto T."/>
            <person name="Ansai T."/>
            <person name="Takehara T."/>
        </authorList>
    </citation>
    <scope>NUCLEOTIDE SEQUENCE [GENOMIC DNA]</scope>
    <scope>FUNCTION</scope>
</reference>
<reference key="2">
    <citation type="journal article" date="2002" name="FEMS Microbiol. Lett.">
        <title>Kinetic analysis of PPi-dependent phosphofructokinase from Porphyromonas gingivalis.</title>
        <authorList>
            <person name="Arimoto T."/>
            <person name="Ansai T."/>
            <person name="Yu W."/>
            <person name="Turner A.J."/>
            <person name="Takehara T."/>
        </authorList>
    </citation>
    <scope>FUNCTION</scope>
    <scope>CATALYTIC ACTIVITY</scope>
    <scope>BIOPHYSICOCHEMICAL PROPERTIES</scope>
    <source>
        <strain>ATCC BAA-1703 / FDC 381</strain>
    </source>
</reference>
<name>PFP_PORGN</name>
<proteinExistence type="evidence at protein level"/>
<sequence length="549" mass="61084">MAKSALHLARMSYQPKMPASLQGAVKIIEGKATEAVSDKEEIAAIFPRTYGLPLISFAPGGERTEYPPTNVGVILSGGQAPGGHNVIAGLFDEMKLLNPDSRLFGFLMGPDGLIEHKYRELTAEVIDEYRNTGGFDMIGSGRTKLDKPEQFEAGLEILRELDIKALVIIGGDDSNTNACILAEYYASIDAGIQVIGCPKTIDGDLKNKQIETSFGFDTAAKVYSELIGNIQRDCNSARKYWHFIKLMGRSASHITLECALQTHPNICIVSEEVEANNYYLDDVVTYIAETVVRRSEAGMNFGTVLIPEGLIEFLPAMKRLIKELNEFLSQNDAEFKLIKRSAQRQYIKNKLSPENSRLYDSLPVDVARQLIADRDPHGNVQVSLIATEKLLADMTAQKLAEWAEEGRFQGRFSTLTHFFGYEGRCAMPSNFDANYCYCLGRAASILIAAGKTGYMAAIKNTADPVSEWEAGGVPMTMMMNMERRSGKMKPVIRKALVDMDGEPYRALREMRREWALSTEYVYPGPIQFFGPEHVCDSPTMTLRLEKNDR</sequence>
<keyword id="KW-0963">Cytoplasm</keyword>
<keyword id="KW-0324">Glycolysis</keyword>
<keyword id="KW-0418">Kinase</keyword>
<keyword id="KW-0460">Magnesium</keyword>
<keyword id="KW-0479">Metal-binding</keyword>
<keyword id="KW-0808">Transferase</keyword>
<comment type="function">
    <text evidence="1 2 3">Catalyzes the phosphorylation of D-fructose 6-phosphate, the first committing step of glycolysis. Uses inorganic phosphate (PPi) as phosphoryl donor instead of ATP like common ATP-dependent phosphofructokinases (ATP-PFKs), which renders the reaction reversible, and can thus function both in glycolysis and gluconeogenesis. Consistently, PPi-PFK can replace the enzymes of both the forward (ATP-PFK) and reverse (fructose-bisphosphatase (FBPase)) reactions.</text>
</comment>
<comment type="catalytic activity">
    <reaction evidence="1 2">
        <text>beta-D-fructose 6-phosphate + diphosphate = beta-D-fructose 1,6-bisphosphate + phosphate + H(+)</text>
        <dbReference type="Rhea" id="RHEA:13613"/>
        <dbReference type="ChEBI" id="CHEBI:15378"/>
        <dbReference type="ChEBI" id="CHEBI:32966"/>
        <dbReference type="ChEBI" id="CHEBI:33019"/>
        <dbReference type="ChEBI" id="CHEBI:43474"/>
        <dbReference type="ChEBI" id="CHEBI:57634"/>
        <dbReference type="EC" id="2.7.1.90"/>
    </reaction>
</comment>
<comment type="cofactor">
    <cofactor evidence="1">
        <name>Mg(2+)</name>
        <dbReference type="ChEBI" id="CHEBI:18420"/>
    </cofactor>
</comment>
<comment type="activity regulation">
    <text evidence="1">Non-allosteric.</text>
</comment>
<comment type="biophysicochemical properties">
    <kinetics>
        <KM evidence="2">5 mM for phosphate</KM>
        <KM evidence="2">1 mM for diphosphate</KM>
        <KM evidence="2">2.2 mM for fructose 6-phosphate</KM>
        <KM evidence="2">0.11 mM for fructose 1,6-bisphosphate</KM>
        <Vmax evidence="2">278.0 umol/min/mg enzyme for the forward reaction</Vmax>
        <Vmax evidence="2">190.0 umol/min/mg enzyme for the reverse reaction</Vmax>
    </kinetics>
</comment>
<comment type="pathway">
    <text evidence="1">Carbohydrate degradation; glycolysis; D-glyceraldehyde 3-phosphate and glycerone phosphate from D-glucose: step 3/4.</text>
</comment>
<comment type="subunit">
    <text evidence="1">Homodimer.</text>
</comment>
<comment type="subcellular location">
    <subcellularLocation>
        <location evidence="1">Cytoplasm</location>
    </subcellularLocation>
</comment>
<comment type="similarity">
    <text evidence="1">Belongs to the phosphofructokinase type A (PFKA) family. PPi-dependent PFK group II subfamily. Clade 'Long' sub-subfamily.</text>
</comment>
<accession>Q9FAF8</accession>
<accession>Q7BWB9</accession>
<dbReference type="EC" id="2.7.1.90" evidence="1"/>
<dbReference type="EMBL" id="AB039836">
    <property type="protein sequence ID" value="BAB16715.1"/>
    <property type="molecule type" value="Genomic_DNA"/>
</dbReference>
<dbReference type="RefSeq" id="WP_004583807.1">
    <property type="nucleotide sequence ID" value="NZ_QPGS01000032.1"/>
</dbReference>
<dbReference type="SMR" id="Q9FAF8"/>
<dbReference type="BRENDA" id="2.7.1.90">
    <property type="organism ID" value="756"/>
</dbReference>
<dbReference type="SABIO-RK" id="Q9FAF8"/>
<dbReference type="UniPathway" id="UPA00109">
    <property type="reaction ID" value="UER00182"/>
</dbReference>
<dbReference type="GO" id="GO:0005829">
    <property type="term" value="C:cytosol"/>
    <property type="evidence" value="ECO:0007669"/>
    <property type="project" value="TreeGrafter"/>
</dbReference>
<dbReference type="GO" id="GO:0003872">
    <property type="term" value="F:6-phosphofructokinase activity"/>
    <property type="evidence" value="ECO:0007669"/>
    <property type="project" value="UniProtKB-UniRule"/>
</dbReference>
<dbReference type="GO" id="GO:0005524">
    <property type="term" value="F:ATP binding"/>
    <property type="evidence" value="ECO:0007669"/>
    <property type="project" value="InterPro"/>
</dbReference>
<dbReference type="GO" id="GO:0047334">
    <property type="term" value="F:diphosphate-fructose-6-phosphate 1-phosphotransferase activity"/>
    <property type="evidence" value="ECO:0007669"/>
    <property type="project" value="UniProtKB-EC"/>
</dbReference>
<dbReference type="GO" id="GO:0046872">
    <property type="term" value="F:metal ion binding"/>
    <property type="evidence" value="ECO:0007669"/>
    <property type="project" value="UniProtKB-KW"/>
</dbReference>
<dbReference type="GO" id="GO:0006002">
    <property type="term" value="P:fructose 6-phosphate metabolic process"/>
    <property type="evidence" value="ECO:0007669"/>
    <property type="project" value="InterPro"/>
</dbReference>
<dbReference type="GO" id="GO:0009749">
    <property type="term" value="P:response to glucose"/>
    <property type="evidence" value="ECO:0007669"/>
    <property type="project" value="TreeGrafter"/>
</dbReference>
<dbReference type="FunFam" id="1.10.10.480:FF:000003">
    <property type="entry name" value="Pyrophosphate--fructose 6-phosphate 1-phosphotransferase"/>
    <property type="match status" value="1"/>
</dbReference>
<dbReference type="Gene3D" id="3.40.50.450">
    <property type="match status" value="1"/>
</dbReference>
<dbReference type="Gene3D" id="3.40.50.460">
    <property type="entry name" value="Phosphofructokinase domain"/>
    <property type="match status" value="1"/>
</dbReference>
<dbReference type="Gene3D" id="1.10.10.480">
    <property type="entry name" value="Phosphofructokinase, domain 3"/>
    <property type="match status" value="1"/>
</dbReference>
<dbReference type="HAMAP" id="MF_01980">
    <property type="entry name" value="Phosphofructokinase_II_Long"/>
    <property type="match status" value="1"/>
</dbReference>
<dbReference type="InterPro" id="IPR022953">
    <property type="entry name" value="ATP_PFK"/>
</dbReference>
<dbReference type="InterPro" id="IPR011183">
    <property type="entry name" value="PfpB_PPi_PFK"/>
</dbReference>
<dbReference type="InterPro" id="IPR000023">
    <property type="entry name" value="Phosphofructokinase_dom"/>
</dbReference>
<dbReference type="InterPro" id="IPR035966">
    <property type="entry name" value="PKF_sf"/>
</dbReference>
<dbReference type="NCBIfam" id="TIGR02477">
    <property type="entry name" value="PFKA_PPi"/>
    <property type="match status" value="1"/>
</dbReference>
<dbReference type="NCBIfam" id="NF005482">
    <property type="entry name" value="PRK07085.1"/>
    <property type="match status" value="1"/>
</dbReference>
<dbReference type="PANTHER" id="PTHR43650">
    <property type="entry name" value="PYROPHOSPHATE--FRUCTOSE 6-PHOSPHATE 1-PHOSPHOTRANSFERASE"/>
    <property type="match status" value="1"/>
</dbReference>
<dbReference type="PANTHER" id="PTHR43650:SF1">
    <property type="entry name" value="PYROPHOSPHATE--FRUCTOSE 6-PHOSPHATE 1-PHOSPHOTRANSFERASE SUBUNIT BETA 2"/>
    <property type="match status" value="1"/>
</dbReference>
<dbReference type="Pfam" id="PF00365">
    <property type="entry name" value="PFK"/>
    <property type="match status" value="1"/>
</dbReference>
<dbReference type="PIRSF" id="PIRSF005677">
    <property type="entry name" value="PPi_PFK_PfpB"/>
    <property type="match status" value="1"/>
</dbReference>
<dbReference type="PRINTS" id="PR00476">
    <property type="entry name" value="PHFRCTKINASE"/>
</dbReference>
<dbReference type="SUPFAM" id="SSF53784">
    <property type="entry name" value="Phosphofructokinase"/>
    <property type="match status" value="1"/>
</dbReference>
<feature type="chain" id="PRO_0000429710" description="Pyrophosphate--fructose 6-phosphate 1-phosphotransferase">
    <location>
        <begin position="1"/>
        <end position="549"/>
    </location>
</feature>
<feature type="active site" description="Proton acceptor" evidence="1">
    <location>
        <position position="202"/>
    </location>
</feature>
<feature type="binding site" evidence="1">
    <location>
        <position position="78"/>
    </location>
    <ligand>
        <name>diphosphate</name>
        <dbReference type="ChEBI" id="CHEBI:33019"/>
    </ligand>
</feature>
<feature type="binding site" evidence="1">
    <location>
        <position position="172"/>
    </location>
    <ligand>
        <name>Mg(2+)</name>
        <dbReference type="ChEBI" id="CHEBI:18420"/>
        <note>catalytic</note>
    </ligand>
</feature>
<feature type="binding site" description="in other chain" evidence="1">
    <location>
        <begin position="200"/>
        <end position="202"/>
    </location>
    <ligand>
        <name>substrate</name>
        <note>ligand shared between dimeric partners</note>
    </ligand>
</feature>
<feature type="binding site" evidence="1">
    <location>
        <begin position="239"/>
        <end position="240"/>
    </location>
    <ligand>
        <name>substrate</name>
        <note>ligand shared between dimeric partners</note>
    </ligand>
</feature>
<feature type="binding site" description="in other chain" evidence="1">
    <location>
        <begin position="247"/>
        <end position="249"/>
    </location>
    <ligand>
        <name>substrate</name>
        <note>ligand shared between dimeric partners</note>
    </ligand>
</feature>
<feature type="binding site" description="in other chain" evidence="1">
    <location>
        <position position="308"/>
    </location>
    <ligand>
        <name>substrate</name>
        <note>ligand shared between dimeric partners</note>
    </ligand>
</feature>
<feature type="binding site" description="in other chain" evidence="1">
    <location>
        <begin position="421"/>
        <end position="424"/>
    </location>
    <ligand>
        <name>substrate</name>
        <note>ligand shared between dimeric partners</note>
    </ligand>
</feature>
<feature type="site" description="Important for catalytic activity and substrate specificity; stabilizes the transition state when the phosphoryl donor is PPi; prevents ATP from binding by mimicking the alpha-phosphate group of ATP" evidence="1">
    <location>
        <position position="173"/>
    </location>
</feature>
<feature type="site" description="Important for catalytic activity; stabilizes the transition state when the phosphoryl donor is PPi" evidence="1">
    <location>
        <position position="199"/>
    </location>
</feature>
<evidence type="ECO:0000255" key="1">
    <source>
        <dbReference type="HAMAP-Rule" id="MF_01980"/>
    </source>
</evidence>
<evidence type="ECO:0000269" key="2">
    <source>
    </source>
</evidence>
<evidence type="ECO:0000269" key="3">
    <source ref="1"/>
</evidence>
<gene>
    <name evidence="1" type="primary">pfp</name>
    <name type="synonym">pfk</name>
</gene>